<dbReference type="EMBL" id="U96082">
    <property type="protein sequence ID" value="AAC63108.1"/>
    <property type="molecule type" value="mRNA"/>
</dbReference>
<dbReference type="SMR" id="O77422"/>
<dbReference type="GO" id="GO:0005576">
    <property type="term" value="C:extracellular region"/>
    <property type="evidence" value="ECO:0007669"/>
    <property type="project" value="UniProtKB-SubCell"/>
</dbReference>
<dbReference type="GO" id="GO:0043176">
    <property type="term" value="F:amine binding"/>
    <property type="evidence" value="ECO:0007669"/>
    <property type="project" value="InterPro"/>
</dbReference>
<dbReference type="GO" id="GO:0030682">
    <property type="term" value="P:symbiont-mediated perturbation of host defenses"/>
    <property type="evidence" value="ECO:0007669"/>
    <property type="project" value="InterPro"/>
</dbReference>
<dbReference type="Gene3D" id="2.40.128.20">
    <property type="match status" value="1"/>
</dbReference>
<dbReference type="InterPro" id="IPR012674">
    <property type="entry name" value="Calycin"/>
</dbReference>
<dbReference type="InterPro" id="IPR002970">
    <property type="entry name" value="Tick_his-bd"/>
</dbReference>
<dbReference type="Pfam" id="PF02098">
    <property type="entry name" value="His_binding"/>
    <property type="match status" value="1"/>
</dbReference>
<dbReference type="PRINTS" id="PR01220">
    <property type="entry name" value="HISBINDING"/>
</dbReference>
<dbReference type="SUPFAM" id="SSF50814">
    <property type="entry name" value="Lipocalins"/>
    <property type="match status" value="1"/>
</dbReference>
<evidence type="ECO:0000250" key="1">
    <source>
        <dbReference type="UniProtKB" id="O77421"/>
    </source>
</evidence>
<evidence type="ECO:0000255" key="2"/>
<evidence type="ECO:0000255" key="3">
    <source>
        <dbReference type="PROSITE-ProRule" id="PRU00498"/>
    </source>
</evidence>
<evidence type="ECO:0000269" key="4">
    <source>
    </source>
</evidence>
<evidence type="ECO:0000303" key="5">
    <source>
    </source>
</evidence>
<evidence type="ECO:0000303" key="6">
    <source>
    </source>
</evidence>
<evidence type="ECO:0000305" key="7"/>
<evidence type="ECO:0000305" key="8">
    <source>
    </source>
</evidence>
<sequence length="200" mass="22852">MKVLLLVLGAALCQNADANPTWANEAKLGSYQDAWKSLQQDQNKRYYLAQATQTTDGVWGEEFTCVSVTAEKIGKKKLNATILYKNKHLTDLKESHETITVWKAYDYTTENGIKYETQGTRTQTFEDVFVFSDYKNCDVIFVPKERGSDEGDYELWVSEDKIDKIPDCCKFTMAYFAQQQEKTVRNVYTDSSCKPAPAQN</sequence>
<feature type="signal peptide" evidence="2">
    <location>
        <begin position="1"/>
        <end position="18"/>
    </location>
</feature>
<feature type="chain" id="PRO_0000021401" description="Male-specific histamine-binding salivary protein">
    <location>
        <begin position="19"/>
        <end position="200"/>
    </location>
</feature>
<feature type="binding site" evidence="1">
    <location>
        <position position="37"/>
    </location>
    <ligand>
        <name>histamine</name>
        <dbReference type="ChEBI" id="CHEBI:58432"/>
        <label>1</label>
    </ligand>
</feature>
<feature type="binding site" evidence="1">
    <location>
        <position position="37"/>
    </location>
    <ligand>
        <name>histamine</name>
        <dbReference type="ChEBI" id="CHEBI:58432"/>
        <label>2</label>
    </ligand>
</feature>
<feature type="binding site" evidence="1">
    <location>
        <position position="41"/>
    </location>
    <ligand>
        <name>histamine</name>
        <dbReference type="ChEBI" id="CHEBI:58432"/>
        <label>2</label>
    </ligand>
</feature>
<feature type="binding site" evidence="1">
    <location>
        <position position="56"/>
    </location>
    <ligand>
        <name>histamine</name>
        <dbReference type="ChEBI" id="CHEBI:58432"/>
        <label>1</label>
    </ligand>
</feature>
<feature type="binding site" evidence="1">
    <location>
        <position position="59"/>
    </location>
    <ligand>
        <name>histamine</name>
        <dbReference type="ChEBI" id="CHEBI:58432"/>
        <label>1</label>
    </ligand>
</feature>
<feature type="binding site" evidence="1">
    <location>
        <position position="97"/>
    </location>
    <ligand>
        <name>histamine</name>
        <dbReference type="ChEBI" id="CHEBI:58432"/>
        <label>1</label>
    </ligand>
</feature>
<feature type="binding site" evidence="1">
    <location>
        <position position="115"/>
    </location>
    <ligand>
        <name>histamine</name>
        <dbReference type="ChEBI" id="CHEBI:58432"/>
        <label>2</label>
    </ligand>
</feature>
<feature type="binding site" evidence="1">
    <location>
        <position position="125"/>
    </location>
    <ligand>
        <name>histamine</name>
        <dbReference type="ChEBI" id="CHEBI:58432"/>
        <label>1</label>
    </ligand>
</feature>
<feature type="binding site" evidence="1">
    <location>
        <position position="138"/>
    </location>
    <ligand>
        <name>histamine</name>
        <dbReference type="ChEBI" id="CHEBI:58432"/>
        <label>1</label>
    </ligand>
</feature>
<feature type="binding site" evidence="1">
    <location>
        <position position="138"/>
    </location>
    <ligand>
        <name>histamine</name>
        <dbReference type="ChEBI" id="CHEBI:58432"/>
        <label>2</label>
    </ligand>
</feature>
<feature type="binding site" evidence="1">
    <location>
        <position position="154"/>
    </location>
    <ligand>
        <name>histamine</name>
        <dbReference type="ChEBI" id="CHEBI:58432"/>
        <label>1</label>
    </ligand>
</feature>
<feature type="binding site" evidence="1">
    <location>
        <position position="156"/>
    </location>
    <ligand>
        <name>histamine</name>
        <dbReference type="ChEBI" id="CHEBI:58432"/>
        <label>2</label>
    </ligand>
</feature>
<feature type="glycosylation site" description="N-linked (GlcNAc...) asparagine" evidence="3">
    <location>
        <position position="79"/>
    </location>
</feature>
<feature type="disulfide bond" evidence="1">
    <location>
        <begin position="65"/>
        <end position="193"/>
    </location>
</feature>
<feature type="disulfide bond" evidence="1">
    <location>
        <begin position="137"/>
        <end position="169"/>
    </location>
</feature>
<feature type="disulfide bond" description="Interchain" evidence="7">
    <location>
        <position position="168"/>
    </location>
</feature>
<name>HBP3_RHIAP</name>
<accession>O77422</accession>
<proteinExistence type="evidence at protein level"/>
<keyword id="KW-1015">Disulfide bond</keyword>
<keyword id="KW-0325">Glycoprotein</keyword>
<keyword id="KW-0964">Secreted</keyword>
<keyword id="KW-0732">Signal</keyword>
<reference key="1">
    <citation type="journal article" date="1999" name="Mol. Cell">
        <title>Tick histamine-binding proteins: isolation, cloning, and three-dimensional structure.</title>
        <authorList>
            <person name="Paesen G.C."/>
            <person name="Adams P.L."/>
            <person name="Harlos K."/>
            <person name="Nuttall P.A."/>
            <person name="Stuart D.I."/>
        </authorList>
    </citation>
    <scope>NUCLEOTIDE SEQUENCE [MRNA]</scope>
    <scope>FUNCTION</scope>
    <scope>SUBUNIT</scope>
    <scope>DEVELOPMENTAL STAGE</scope>
    <scope>GLYCOSYLATION</scope>
    <scope>RECOMBINANT EXPRESSION</scope>
    <source>
        <tissue>Salivary gland</tissue>
    </source>
</reference>
<reference key="2">
    <citation type="journal article" date="2000" name="Biochim. Biophys. Acta">
        <title>Tick histamine-binding proteins: lipocalins with a second binding cavity.</title>
        <authorList>
            <person name="Paesen G.C."/>
            <person name="Adams P.L."/>
            <person name="Nuttall P.A."/>
            <person name="Stuart D.L."/>
        </authorList>
    </citation>
    <scope>REVIEW</scope>
</reference>
<organism>
    <name type="scientific">Rhipicephalus appendiculatus</name>
    <name type="common">Brown ear tick</name>
    <dbReference type="NCBI Taxonomy" id="34631"/>
    <lineage>
        <taxon>Eukaryota</taxon>
        <taxon>Metazoa</taxon>
        <taxon>Ecdysozoa</taxon>
        <taxon>Arthropoda</taxon>
        <taxon>Chelicerata</taxon>
        <taxon>Arachnida</taxon>
        <taxon>Acari</taxon>
        <taxon>Parasitiformes</taxon>
        <taxon>Ixodida</taxon>
        <taxon>Ixodoidea</taxon>
        <taxon>Ixodidae</taxon>
        <taxon>Rhipicephalinae</taxon>
        <taxon>Rhipicephalus</taxon>
        <taxon>Rhipicephalus</taxon>
    </lineage>
</organism>
<protein>
    <recommendedName>
        <fullName evidence="5">Male-specific histamine-binding salivary protein</fullName>
        <shortName evidence="5">MS-HBP</shortName>
    </recommendedName>
    <alternativeName>
        <fullName evidence="5 6">RaHBP3</fullName>
    </alternativeName>
</protein>
<comment type="function">
    <text evidence="1 4">Salivary tick protein that acts by scavenging histamine at the wound site, outcompeting histamine receptors for histamine, thereby overcoming host inflammatory responses (PubMed:10360182). Binds histamine with a high-affinity (Kd=1.2 nM) (PubMed:10360182). Contains two binding histamine sites (H and L), that appear to bind histamine with differing affinities (By similarity).</text>
</comment>
<comment type="subunit">
    <text evidence="8">Homodimer; disulcde-linked.</text>
</comment>
<comment type="subcellular location">
    <subcellularLocation>
        <location evidence="8">Secreted</location>
    </subcellularLocation>
</comment>
<comment type="tissue specificity">
    <text evidence="8">Expressed in salivary glands.</text>
</comment>
<comment type="developmental stage">
    <text evidence="4">Exclusively secreted by larvae, nymphs and adult male ticks.</text>
</comment>
<comment type="domain">
    <text evidence="1">Contains 2 sites/pockets that bind histamine with different affinities. Site H (high affinity) is indicated here as binding to histamine 1, and site L (low affinity) is indicated as binding to histamine 2.</text>
</comment>
<comment type="PTM">
    <text evidence="8">N-glycosylated.</text>
</comment>
<comment type="similarity">
    <text evidence="7">Belongs to the calycin superfamily. Histamine-binding salivary protein family.</text>
</comment>